<keyword id="KW-0007">Acetylation</keyword>
<keyword id="KW-0025">Alternative splicing</keyword>
<keyword id="KW-0966">Cell projection</keyword>
<keyword id="KW-0175">Coiled coil</keyword>
<keyword id="KW-0963">Cytoplasm</keyword>
<keyword id="KW-0206">Cytoskeleton</keyword>
<keyword id="KW-0217">Developmental protein</keyword>
<keyword id="KW-0903">Direct protein sequencing</keyword>
<keyword id="KW-0597">Phosphoprotein</keyword>
<keyword id="KW-1267">Proteomics identification</keyword>
<keyword id="KW-1185">Reference proteome</keyword>
<protein>
    <recommendedName>
        <fullName evidence="11">Shootin-1</fullName>
    </recommendedName>
    <alternativeName>
        <fullName evidence="1">Shootin1</fullName>
    </alternativeName>
</protein>
<feature type="chain" id="PRO_0000295740" description="Shootin-1">
    <location>
        <begin position="1"/>
        <end position="631"/>
    </location>
</feature>
<feature type="region of interest" description="Disordered" evidence="4">
    <location>
        <begin position="343"/>
        <end position="511"/>
    </location>
</feature>
<feature type="region of interest" description="Disordered" evidence="4">
    <location>
        <begin position="524"/>
        <end position="566"/>
    </location>
</feature>
<feature type="region of interest" description="Disordered" evidence="4">
    <location>
        <begin position="579"/>
        <end position="631"/>
    </location>
</feature>
<feature type="coiled-coil region" evidence="3">
    <location>
        <begin position="7"/>
        <end position="353"/>
    </location>
</feature>
<feature type="compositionally biased region" description="Pro residues" evidence="4">
    <location>
        <begin position="352"/>
        <end position="369"/>
    </location>
</feature>
<feature type="compositionally biased region" description="Basic and acidic residues" evidence="4">
    <location>
        <begin position="403"/>
        <end position="418"/>
    </location>
</feature>
<feature type="compositionally biased region" description="Polar residues" evidence="4">
    <location>
        <begin position="456"/>
        <end position="465"/>
    </location>
</feature>
<feature type="compositionally biased region" description="Polar residues" evidence="4">
    <location>
        <begin position="490"/>
        <end position="505"/>
    </location>
</feature>
<feature type="compositionally biased region" description="Polar residues" evidence="4">
    <location>
        <begin position="550"/>
        <end position="561"/>
    </location>
</feature>
<feature type="compositionally biased region" description="Basic and acidic residues" evidence="4">
    <location>
        <begin position="590"/>
        <end position="631"/>
    </location>
</feature>
<feature type="modified residue" description="N-acetylmethionine" evidence="2">
    <location>
        <position position="1"/>
    </location>
</feature>
<feature type="modified residue" description="Phosphoserine" evidence="2">
    <location>
        <position position="3"/>
    </location>
</feature>
<feature type="modified residue" description="Phosphoserine" evidence="16">
    <location>
        <position position="4"/>
    </location>
</feature>
<feature type="modified residue" description="Phosphoserine; by PAK1" evidence="1">
    <location>
        <position position="101"/>
    </location>
</feature>
<feature type="modified residue" description="Phosphoserine" evidence="14 16">
    <location>
        <position position="249"/>
    </location>
</feature>
<feature type="modified residue" description="Phosphoserine" evidence="16 17">
    <location>
        <position position="375"/>
    </location>
</feature>
<feature type="modified residue" description="Phosphoserine" evidence="16">
    <location>
        <position position="473"/>
    </location>
</feature>
<feature type="modified residue" description="Phosphothreonine" evidence="16">
    <location>
        <position position="487"/>
    </location>
</feature>
<feature type="modified residue" description="Phosphoserine" evidence="16 17">
    <location>
        <position position="494"/>
    </location>
</feature>
<feature type="modified residue" description="Phosphothreonine" evidence="14">
    <location>
        <position position="496"/>
    </location>
</feature>
<feature type="modified residue" description="Phosphoserine" evidence="12 13 14 15 16 17">
    <location>
        <position position="506"/>
    </location>
</feature>
<feature type="modified residue" description="Phosphoserine" evidence="12">
    <location>
        <position position="515"/>
    </location>
</feature>
<feature type="modified residue" description="Phosphoserine" evidence="12 14 16">
    <location>
        <position position="532"/>
    </location>
</feature>
<feature type="modified residue" description="Phosphoserine" evidence="16">
    <location>
        <position position="534"/>
    </location>
</feature>
<feature type="modified residue" description="Phosphothreonine" evidence="12 14 16">
    <location>
        <position position="537"/>
    </location>
</feature>
<feature type="splice variant" id="VSP_036497" description="In isoform 7." evidence="6">
    <location>
        <begin position="1"/>
        <end position="412"/>
    </location>
</feature>
<feature type="splice variant" id="VSP_036498" description="In isoform 5 and isoform 8." evidence="6">
    <location>
        <begin position="1"/>
        <end position="60"/>
    </location>
</feature>
<feature type="splice variant" id="VSP_036499" description="In isoform 6." evidence="6">
    <original>MNSSDEEKQLQLITSLKEQAIGEYEDLRAENQKTKEK</original>
    <variation>MPRILKQ</variation>
    <location>
        <begin position="1"/>
        <end position="37"/>
    </location>
</feature>
<feature type="splice variant" id="VSP_027050" description="In isoform 2." evidence="5 6 8">
    <original>GTL</original>
    <variation>ASQ</variation>
    <location>
        <begin position="454"/>
        <end position="456"/>
    </location>
</feature>
<feature type="splice variant" id="VSP_027051" description="In isoform 2." evidence="5 6 8">
    <location>
        <begin position="457"/>
        <end position="631"/>
    </location>
</feature>
<feature type="splice variant" id="VSP_027052" description="In isoform 4 and isoform 8." evidence="6 7">
    <location>
        <begin position="559"/>
        <end position="631"/>
    </location>
</feature>
<feature type="splice variant" id="VSP_027053" description="In isoform 3." evidence="9">
    <original>VRETDSSNC</original>
    <variation>FFPFHFGFEGVLPLAGVTLSTKARDPK</variation>
    <location>
        <begin position="623"/>
        <end position="631"/>
    </location>
</feature>
<feature type="sequence conflict" description="In Ref. 4; AC023283." evidence="10" ref="4">
    <original>T</original>
    <variation>A</variation>
    <location>
        <position position="399"/>
    </location>
</feature>
<feature type="sequence conflict" description="In Ref. 2; BAG52345." evidence="10" ref="2">
    <original>I</original>
    <variation>V</variation>
    <location>
        <position position="417"/>
    </location>
</feature>
<name>SHOT1_HUMAN</name>
<sequence length="631" mass="71640">MNSSDEEKQLQLITSLKEQAIGEYEDLRAENQKTKEKCDKIRQERDEAVKKLEEFQKISHMVIEEVNFMQNHLEIEKTCRESAEALATKLNKENKTLKRISMLYMAKLGPDVITEEINIDDEDSTTDTDGAAETCVSVQCQKQIKELRDQIVSVQEEKKILAIELENLKSKLVEVIEEVNKVKQEKTVLNSEVLEQRKVLEKCNRVSMLAVEEYEEMQVNLELEKDLRKKAESFAQEMFIEQNKLKRQSHLLLQSSIPDQQLLKALDENAKLTQQLEEERIQHQQKVKELEEQLENETLHKEIHNLKQQLELLEEDKKELELKYQNSEEKARNLKHSVDELQKRVNQSENSVPPPPPPPPPLPPPPPNPIRSLMSMIRKRSHPSGSGAKKEKATQPETTEEVTDLKRQAVEEMMDRIKKGVHLRPVNQTARPKTKPESSKGCESAVDELKGILGTLNKSTSSRSLKSLDPENSETELERILRRRKVTAEADSSSPTGILATSESKSMPVLGSVSSVTKTALNKKTLEAEFNSPSPPTPEPGEGPRKLEGCTSSKVTFQPPSSIGCRKKYIDGEKQAEPVVVLDPVSTHEPQTKDQVAEKDPTQHKEDEGEIQPENKEDSIENVRETDSSNC</sequence>
<gene>
    <name evidence="11" type="primary">SHTN1</name>
    <name type="synonym">KIAA1598</name>
</gene>
<accession>A0MZ66</accession>
<accession>A8MYU7</accession>
<accession>B3KRD3</accession>
<accession>B3KRH2</accession>
<accession>B3KTE0</accession>
<accession>B3KTJ7</accession>
<accession>B3KTJ8</accession>
<accession>B4E3U1</accession>
<accession>B7Z7Z9</accession>
<accession>Q68DG1</accession>
<accession>Q6PIM5</accession>
<accession>Q9HCH4</accession>
<accession>Q9NUV0</accession>
<proteinExistence type="evidence at protein level"/>
<evidence type="ECO:0000250" key="1">
    <source>
        <dbReference type="UniProtKB" id="A0MZ67"/>
    </source>
</evidence>
<evidence type="ECO:0000250" key="2">
    <source>
        <dbReference type="UniProtKB" id="Q8K2Q9"/>
    </source>
</evidence>
<evidence type="ECO:0000255" key="3"/>
<evidence type="ECO:0000256" key="4">
    <source>
        <dbReference type="SAM" id="MobiDB-lite"/>
    </source>
</evidence>
<evidence type="ECO:0000303" key="5">
    <source>
    </source>
</evidence>
<evidence type="ECO:0000303" key="6">
    <source>
    </source>
</evidence>
<evidence type="ECO:0000303" key="7">
    <source>
    </source>
</evidence>
<evidence type="ECO:0000303" key="8">
    <source>
    </source>
</evidence>
<evidence type="ECO:0000303" key="9">
    <source>
    </source>
</evidence>
<evidence type="ECO:0000305" key="10"/>
<evidence type="ECO:0000312" key="11">
    <source>
        <dbReference type="HGNC" id="HGNC:29319"/>
    </source>
</evidence>
<evidence type="ECO:0007744" key="12">
    <source>
    </source>
</evidence>
<evidence type="ECO:0007744" key="13">
    <source>
    </source>
</evidence>
<evidence type="ECO:0007744" key="14">
    <source>
    </source>
</evidence>
<evidence type="ECO:0007744" key="15">
    <source>
    </source>
</evidence>
<evidence type="ECO:0007744" key="16">
    <source>
    </source>
</evidence>
<evidence type="ECO:0007744" key="17">
    <source>
    </source>
</evidence>
<reference key="1">
    <citation type="journal article" date="2006" name="J. Cell Biol.">
        <title>Shootin1: a protein involved in the organization of an asymmetric signal for neuronal polarization.</title>
        <authorList>
            <person name="Toriyama M."/>
            <person name="Shimada T."/>
            <person name="Kim K.B."/>
            <person name="Mitsuba M."/>
            <person name="Nomura E."/>
            <person name="Katsuta K."/>
            <person name="Sakumura Y."/>
            <person name="Roepstorff P."/>
            <person name="Inagaki N."/>
        </authorList>
    </citation>
    <scope>NUCLEOTIDE SEQUENCE [MRNA] (ISOFORM 2)</scope>
</reference>
<reference key="2">
    <citation type="journal article" date="2004" name="Nat. Genet.">
        <title>Complete sequencing and characterization of 21,243 full-length human cDNAs.</title>
        <authorList>
            <person name="Ota T."/>
            <person name="Suzuki Y."/>
            <person name="Nishikawa T."/>
            <person name="Otsuki T."/>
            <person name="Sugiyama T."/>
            <person name="Irie R."/>
            <person name="Wakamatsu A."/>
            <person name="Hayashi K."/>
            <person name="Sato H."/>
            <person name="Nagai K."/>
            <person name="Kimura K."/>
            <person name="Makita H."/>
            <person name="Sekine M."/>
            <person name="Obayashi M."/>
            <person name="Nishi T."/>
            <person name="Shibahara T."/>
            <person name="Tanaka T."/>
            <person name="Ishii S."/>
            <person name="Yamamoto J."/>
            <person name="Saito K."/>
            <person name="Kawai Y."/>
            <person name="Isono Y."/>
            <person name="Nakamura Y."/>
            <person name="Nagahari K."/>
            <person name="Murakami K."/>
            <person name="Yasuda T."/>
            <person name="Iwayanagi T."/>
            <person name="Wagatsuma M."/>
            <person name="Shiratori A."/>
            <person name="Sudo H."/>
            <person name="Hosoiri T."/>
            <person name="Kaku Y."/>
            <person name="Kodaira H."/>
            <person name="Kondo H."/>
            <person name="Sugawara M."/>
            <person name="Takahashi M."/>
            <person name="Kanda K."/>
            <person name="Yokoi T."/>
            <person name="Furuya T."/>
            <person name="Kikkawa E."/>
            <person name="Omura Y."/>
            <person name="Abe K."/>
            <person name="Kamihara K."/>
            <person name="Katsuta N."/>
            <person name="Sato K."/>
            <person name="Tanikawa M."/>
            <person name="Yamazaki M."/>
            <person name="Ninomiya K."/>
            <person name="Ishibashi T."/>
            <person name="Yamashita H."/>
            <person name="Murakawa K."/>
            <person name="Fujimori K."/>
            <person name="Tanai H."/>
            <person name="Kimata M."/>
            <person name="Watanabe M."/>
            <person name="Hiraoka S."/>
            <person name="Chiba Y."/>
            <person name="Ishida S."/>
            <person name="Ono Y."/>
            <person name="Takiguchi S."/>
            <person name="Watanabe S."/>
            <person name="Yosida M."/>
            <person name="Hotuta T."/>
            <person name="Kusano J."/>
            <person name="Kanehori K."/>
            <person name="Takahashi-Fujii A."/>
            <person name="Hara H."/>
            <person name="Tanase T.-O."/>
            <person name="Nomura Y."/>
            <person name="Togiya S."/>
            <person name="Komai F."/>
            <person name="Hara R."/>
            <person name="Takeuchi K."/>
            <person name="Arita M."/>
            <person name="Imose N."/>
            <person name="Musashino K."/>
            <person name="Yuuki H."/>
            <person name="Oshima A."/>
            <person name="Sasaki N."/>
            <person name="Aotsuka S."/>
            <person name="Yoshikawa Y."/>
            <person name="Matsunawa H."/>
            <person name="Ichihara T."/>
            <person name="Shiohata N."/>
            <person name="Sano S."/>
            <person name="Moriya S."/>
            <person name="Momiyama H."/>
            <person name="Satoh N."/>
            <person name="Takami S."/>
            <person name="Terashima Y."/>
            <person name="Suzuki O."/>
            <person name="Nakagawa S."/>
            <person name="Senoh A."/>
            <person name="Mizoguchi H."/>
            <person name="Goto Y."/>
            <person name="Shimizu F."/>
            <person name="Wakebe H."/>
            <person name="Hishigaki H."/>
            <person name="Watanabe T."/>
            <person name="Sugiyama A."/>
            <person name="Takemoto M."/>
            <person name="Kawakami B."/>
            <person name="Yamazaki M."/>
            <person name="Watanabe K."/>
            <person name="Kumagai A."/>
            <person name="Itakura S."/>
            <person name="Fukuzumi Y."/>
            <person name="Fujimori Y."/>
            <person name="Komiyama M."/>
            <person name="Tashiro H."/>
            <person name="Tanigami A."/>
            <person name="Fujiwara T."/>
            <person name="Ono T."/>
            <person name="Yamada K."/>
            <person name="Fujii Y."/>
            <person name="Ozaki K."/>
            <person name="Hirao M."/>
            <person name="Ohmori Y."/>
            <person name="Kawabata A."/>
            <person name="Hikiji T."/>
            <person name="Kobatake N."/>
            <person name="Inagaki H."/>
            <person name="Ikema Y."/>
            <person name="Okamoto S."/>
            <person name="Okitani R."/>
            <person name="Kawakami T."/>
            <person name="Noguchi S."/>
            <person name="Itoh T."/>
            <person name="Shigeta K."/>
            <person name="Senba T."/>
            <person name="Matsumura K."/>
            <person name="Nakajima Y."/>
            <person name="Mizuno T."/>
            <person name="Morinaga M."/>
            <person name="Sasaki M."/>
            <person name="Togashi T."/>
            <person name="Oyama M."/>
            <person name="Hata H."/>
            <person name="Watanabe M."/>
            <person name="Komatsu T."/>
            <person name="Mizushima-Sugano J."/>
            <person name="Satoh T."/>
            <person name="Shirai Y."/>
            <person name="Takahashi Y."/>
            <person name="Nakagawa K."/>
            <person name="Okumura K."/>
            <person name="Nagase T."/>
            <person name="Nomura N."/>
            <person name="Kikuchi H."/>
            <person name="Masuho Y."/>
            <person name="Yamashita R."/>
            <person name="Nakai K."/>
            <person name="Yada T."/>
            <person name="Nakamura Y."/>
            <person name="Ohara O."/>
            <person name="Isogai T."/>
            <person name="Sugano S."/>
        </authorList>
    </citation>
    <scope>NUCLEOTIDE SEQUENCE [LARGE SCALE MRNA] (ISOFORMS 2; 5; 6; 7 AND 8)</scope>
    <scope>NUCLEOTIDE SEQUENCE [LARGE SCALE MRNA] OF 349-631 (ISOFORM 1)</scope>
    <source>
        <tissue>Brain</tissue>
        <tissue>Placenta</tissue>
        <tissue>Testis</tissue>
        <tissue>Uterus</tissue>
    </source>
</reference>
<reference key="3">
    <citation type="journal article" date="2007" name="BMC Genomics">
        <title>The full-ORF clone resource of the German cDNA consortium.</title>
        <authorList>
            <person name="Bechtel S."/>
            <person name="Rosenfelder H."/>
            <person name="Duda A."/>
            <person name="Schmidt C.P."/>
            <person name="Ernst U."/>
            <person name="Wellenreuther R."/>
            <person name="Mehrle A."/>
            <person name="Schuster C."/>
            <person name="Bahr A."/>
            <person name="Bloecker H."/>
            <person name="Heubner D."/>
            <person name="Hoerlein A."/>
            <person name="Michel G."/>
            <person name="Wedler H."/>
            <person name="Koehrer K."/>
            <person name="Ottenwaelder B."/>
            <person name="Poustka A."/>
            <person name="Wiemann S."/>
            <person name="Schupp I."/>
        </authorList>
    </citation>
    <scope>NUCLEOTIDE SEQUENCE [LARGE SCALE MRNA] (ISOFORM 3)</scope>
    <source>
        <tissue>Testis</tissue>
    </source>
</reference>
<reference key="4">
    <citation type="journal article" date="2004" name="Nature">
        <title>The DNA sequence and comparative analysis of human chromosome 10.</title>
        <authorList>
            <person name="Deloukas P."/>
            <person name="Earthrowl M.E."/>
            <person name="Grafham D.V."/>
            <person name="Rubenfield M."/>
            <person name="French L."/>
            <person name="Steward C.A."/>
            <person name="Sims S.K."/>
            <person name="Jones M.C."/>
            <person name="Searle S."/>
            <person name="Scott C."/>
            <person name="Howe K."/>
            <person name="Hunt S.E."/>
            <person name="Andrews T.D."/>
            <person name="Gilbert J.G.R."/>
            <person name="Swarbreck D."/>
            <person name="Ashurst J.L."/>
            <person name="Taylor A."/>
            <person name="Battles J."/>
            <person name="Bird C.P."/>
            <person name="Ainscough R."/>
            <person name="Almeida J.P."/>
            <person name="Ashwell R.I.S."/>
            <person name="Ambrose K.D."/>
            <person name="Babbage A.K."/>
            <person name="Bagguley C.L."/>
            <person name="Bailey J."/>
            <person name="Banerjee R."/>
            <person name="Bates K."/>
            <person name="Beasley H."/>
            <person name="Bray-Allen S."/>
            <person name="Brown A.J."/>
            <person name="Brown J.Y."/>
            <person name="Burford D.C."/>
            <person name="Burrill W."/>
            <person name="Burton J."/>
            <person name="Cahill P."/>
            <person name="Camire D."/>
            <person name="Carter N.P."/>
            <person name="Chapman J.C."/>
            <person name="Clark S.Y."/>
            <person name="Clarke G."/>
            <person name="Clee C.M."/>
            <person name="Clegg S."/>
            <person name="Corby N."/>
            <person name="Coulson A."/>
            <person name="Dhami P."/>
            <person name="Dutta I."/>
            <person name="Dunn M."/>
            <person name="Faulkner L."/>
            <person name="Frankish A."/>
            <person name="Frankland J.A."/>
            <person name="Garner P."/>
            <person name="Garnett J."/>
            <person name="Gribble S."/>
            <person name="Griffiths C."/>
            <person name="Grocock R."/>
            <person name="Gustafson E."/>
            <person name="Hammond S."/>
            <person name="Harley J.L."/>
            <person name="Hart E."/>
            <person name="Heath P.D."/>
            <person name="Ho T.P."/>
            <person name="Hopkins B."/>
            <person name="Horne J."/>
            <person name="Howden P.J."/>
            <person name="Huckle E."/>
            <person name="Hynds C."/>
            <person name="Johnson C."/>
            <person name="Johnson D."/>
            <person name="Kana A."/>
            <person name="Kay M."/>
            <person name="Kimberley A.M."/>
            <person name="Kershaw J.K."/>
            <person name="Kokkinaki M."/>
            <person name="Laird G.K."/>
            <person name="Lawlor S."/>
            <person name="Lee H.M."/>
            <person name="Leongamornlert D.A."/>
            <person name="Laird G."/>
            <person name="Lloyd C."/>
            <person name="Lloyd D.M."/>
            <person name="Loveland J."/>
            <person name="Lovell J."/>
            <person name="McLaren S."/>
            <person name="McLay K.E."/>
            <person name="McMurray A."/>
            <person name="Mashreghi-Mohammadi M."/>
            <person name="Matthews L."/>
            <person name="Milne S."/>
            <person name="Nickerson T."/>
            <person name="Nguyen M."/>
            <person name="Overton-Larty E."/>
            <person name="Palmer S.A."/>
            <person name="Pearce A.V."/>
            <person name="Peck A.I."/>
            <person name="Pelan S."/>
            <person name="Phillimore B."/>
            <person name="Porter K."/>
            <person name="Rice C.M."/>
            <person name="Rogosin A."/>
            <person name="Ross M.T."/>
            <person name="Sarafidou T."/>
            <person name="Sehra H.K."/>
            <person name="Shownkeen R."/>
            <person name="Skuce C.D."/>
            <person name="Smith M."/>
            <person name="Standring L."/>
            <person name="Sycamore N."/>
            <person name="Tester J."/>
            <person name="Thorpe A."/>
            <person name="Torcasso W."/>
            <person name="Tracey A."/>
            <person name="Tromans A."/>
            <person name="Tsolas J."/>
            <person name="Wall M."/>
            <person name="Walsh J."/>
            <person name="Wang H."/>
            <person name="Weinstock K."/>
            <person name="West A.P."/>
            <person name="Willey D.L."/>
            <person name="Whitehead S.L."/>
            <person name="Wilming L."/>
            <person name="Wray P.W."/>
            <person name="Young L."/>
            <person name="Chen Y."/>
            <person name="Lovering R.C."/>
            <person name="Moschonas N.K."/>
            <person name="Siebert R."/>
            <person name="Fechtel K."/>
            <person name="Bentley D."/>
            <person name="Durbin R.M."/>
            <person name="Hubbard T."/>
            <person name="Doucette-Stamm L."/>
            <person name="Beck S."/>
            <person name="Smith D.R."/>
            <person name="Rogers J."/>
        </authorList>
    </citation>
    <scope>NUCLEOTIDE SEQUENCE [LARGE SCALE GENOMIC DNA]</scope>
</reference>
<reference key="5">
    <citation type="submission" date="2005-09" db="EMBL/GenBank/DDBJ databases">
        <authorList>
            <person name="Mural R.J."/>
            <person name="Istrail S."/>
            <person name="Sutton G.G."/>
            <person name="Florea L."/>
            <person name="Halpern A.L."/>
            <person name="Mobarry C.M."/>
            <person name="Lippert R."/>
            <person name="Walenz B."/>
            <person name="Shatkay H."/>
            <person name="Dew I."/>
            <person name="Miller J.R."/>
            <person name="Flanigan M.J."/>
            <person name="Edwards N.J."/>
            <person name="Bolanos R."/>
            <person name="Fasulo D."/>
            <person name="Halldorsson B.V."/>
            <person name="Hannenhalli S."/>
            <person name="Turner R."/>
            <person name="Yooseph S."/>
            <person name="Lu F."/>
            <person name="Nusskern D.R."/>
            <person name="Shue B.C."/>
            <person name="Zheng X.H."/>
            <person name="Zhong F."/>
            <person name="Delcher A.L."/>
            <person name="Huson D.H."/>
            <person name="Kravitz S.A."/>
            <person name="Mouchard L."/>
            <person name="Reinert K."/>
            <person name="Remington K.A."/>
            <person name="Clark A.G."/>
            <person name="Waterman M.S."/>
            <person name="Eichler E.E."/>
            <person name="Adams M.D."/>
            <person name="Hunkapiller M.W."/>
            <person name="Myers E.W."/>
            <person name="Venter J.C."/>
        </authorList>
    </citation>
    <scope>NUCLEOTIDE SEQUENCE [LARGE SCALE GENOMIC DNA]</scope>
</reference>
<reference key="6">
    <citation type="journal article" date="2004" name="Genome Res.">
        <title>The status, quality, and expansion of the NIH full-length cDNA project: the Mammalian Gene Collection (MGC).</title>
        <authorList>
            <consortium name="The MGC Project Team"/>
        </authorList>
    </citation>
    <scope>NUCLEOTIDE SEQUENCE [LARGE SCALE MRNA] (ISOFORM 4)</scope>
    <scope>NUCLEOTIDE SEQUENCE [LARGE SCALE MRNA] OF 388-631 (ISOFORM 1)</scope>
    <source>
        <tissue>Brain</tissue>
    </source>
</reference>
<reference key="7">
    <citation type="journal article" date="2000" name="DNA Res.">
        <title>Prediction of the coding sequences of unidentified human genes. XVIII. The complete sequences of 100 new cDNA clones from brain which code for large proteins in vitro.</title>
        <authorList>
            <person name="Nagase T."/>
            <person name="Kikuno R."/>
            <person name="Nakayama M."/>
            <person name="Hirosawa M."/>
            <person name="Ohara O."/>
        </authorList>
    </citation>
    <scope>NUCLEOTIDE SEQUENCE [LARGE SCALE MRNA] OF 11-631 (ISOFORM 2)</scope>
</reference>
<reference key="8">
    <citation type="submission" date="2009-01" db="UniProtKB">
        <authorList>
            <person name="Lubec G."/>
            <person name="Chen W.-Q."/>
            <person name="Sun Y."/>
        </authorList>
    </citation>
    <scope>PROTEIN SEQUENCE OF 9-17; 160-169; 187-197 AND 467-479</scope>
    <scope>IDENTIFICATION BY MASS SPECTROMETRY</scope>
    <source>
        <tissue>Fetal brain cortex</tissue>
    </source>
</reference>
<reference key="9">
    <citation type="journal article" date="2006" name="Nat. Biotechnol.">
        <title>A probability-based approach for high-throughput protein phosphorylation analysis and site localization.</title>
        <authorList>
            <person name="Beausoleil S.A."/>
            <person name="Villen J."/>
            <person name="Gerber S.A."/>
            <person name="Rush J."/>
            <person name="Gygi S.P."/>
        </authorList>
    </citation>
    <scope>IDENTIFICATION BY MASS SPECTROMETRY [LARGE SCALE ANALYSIS]</scope>
    <source>
        <tissue>Cervix carcinoma</tissue>
    </source>
</reference>
<reference key="10">
    <citation type="journal article" date="2008" name="Proc. Natl. Acad. Sci. U.S.A.">
        <title>A quantitative atlas of mitotic phosphorylation.</title>
        <authorList>
            <person name="Dephoure N."/>
            <person name="Zhou C."/>
            <person name="Villen J."/>
            <person name="Beausoleil S.A."/>
            <person name="Bakalarski C.E."/>
            <person name="Elledge S.J."/>
            <person name="Gygi S.P."/>
        </authorList>
    </citation>
    <scope>PHOSPHORYLATION [LARGE SCALE ANALYSIS] AT SER-506; SER-515; SER-532 AND THR-537</scope>
    <scope>IDENTIFICATION BY MASS SPECTROMETRY [LARGE SCALE ANALYSIS]</scope>
    <source>
        <tissue>Cervix carcinoma</tissue>
    </source>
</reference>
<reference key="11">
    <citation type="journal article" date="2009" name="Anal. Chem.">
        <title>Lys-N and trypsin cover complementary parts of the phosphoproteome in a refined SCX-based approach.</title>
        <authorList>
            <person name="Gauci S."/>
            <person name="Helbig A.O."/>
            <person name="Slijper M."/>
            <person name="Krijgsveld J."/>
            <person name="Heck A.J."/>
            <person name="Mohammed S."/>
        </authorList>
    </citation>
    <scope>IDENTIFICATION BY MASS SPECTROMETRY [LARGE SCALE ANALYSIS]</scope>
</reference>
<reference key="12">
    <citation type="journal article" date="2009" name="Sci. Signal.">
        <title>Quantitative phosphoproteomic analysis of T cell receptor signaling reveals system-wide modulation of protein-protein interactions.</title>
        <authorList>
            <person name="Mayya V."/>
            <person name="Lundgren D.H."/>
            <person name="Hwang S.-I."/>
            <person name="Rezaul K."/>
            <person name="Wu L."/>
            <person name="Eng J.K."/>
            <person name="Rodionov V."/>
            <person name="Han D.K."/>
        </authorList>
    </citation>
    <scope>PHOSPHORYLATION [LARGE SCALE ANALYSIS] AT SER-506</scope>
    <scope>IDENTIFICATION BY MASS SPECTROMETRY [LARGE SCALE ANALYSIS]</scope>
    <source>
        <tissue>Leukemic T-cell</tissue>
    </source>
</reference>
<reference key="13">
    <citation type="journal article" date="2010" name="Sci. Signal.">
        <title>Quantitative phosphoproteomics reveals widespread full phosphorylation site occupancy during mitosis.</title>
        <authorList>
            <person name="Olsen J.V."/>
            <person name="Vermeulen M."/>
            <person name="Santamaria A."/>
            <person name="Kumar C."/>
            <person name="Miller M.L."/>
            <person name="Jensen L.J."/>
            <person name="Gnad F."/>
            <person name="Cox J."/>
            <person name="Jensen T.S."/>
            <person name="Nigg E.A."/>
            <person name="Brunak S."/>
            <person name="Mann M."/>
        </authorList>
    </citation>
    <scope>PHOSPHORYLATION [LARGE SCALE ANALYSIS] AT SER-249; THR-496; SER-506; SER-532 AND THR-537</scope>
    <scope>IDENTIFICATION BY MASS SPECTROMETRY [LARGE SCALE ANALYSIS]</scope>
    <source>
        <tissue>Cervix carcinoma</tissue>
    </source>
</reference>
<reference key="14">
    <citation type="journal article" date="2011" name="BMC Syst. Biol.">
        <title>Initial characterization of the human central proteome.</title>
        <authorList>
            <person name="Burkard T.R."/>
            <person name="Planyavsky M."/>
            <person name="Kaupe I."/>
            <person name="Breitwieser F.P."/>
            <person name="Buerckstuemmer T."/>
            <person name="Bennett K.L."/>
            <person name="Superti-Furga G."/>
            <person name="Colinge J."/>
        </authorList>
    </citation>
    <scope>IDENTIFICATION BY MASS SPECTROMETRY [LARGE SCALE ANALYSIS]</scope>
</reference>
<reference key="15">
    <citation type="journal article" date="2011" name="Sci. Signal.">
        <title>System-wide temporal characterization of the proteome and phosphoproteome of human embryonic stem cell differentiation.</title>
        <authorList>
            <person name="Rigbolt K.T."/>
            <person name="Prokhorova T.A."/>
            <person name="Akimov V."/>
            <person name="Henningsen J."/>
            <person name="Johansen P.T."/>
            <person name="Kratchmarova I."/>
            <person name="Kassem M."/>
            <person name="Mann M."/>
            <person name="Olsen J.V."/>
            <person name="Blagoev B."/>
        </authorList>
    </citation>
    <scope>PHOSPHORYLATION [LARGE SCALE ANALYSIS] AT SER-506</scope>
    <scope>IDENTIFICATION BY MASS SPECTROMETRY [LARGE SCALE ANALYSIS]</scope>
</reference>
<reference key="16">
    <citation type="journal article" date="2013" name="J. Proteome Res.">
        <title>Toward a comprehensive characterization of a human cancer cell phosphoproteome.</title>
        <authorList>
            <person name="Zhou H."/>
            <person name="Di Palma S."/>
            <person name="Preisinger C."/>
            <person name="Peng M."/>
            <person name="Polat A.N."/>
            <person name="Heck A.J."/>
            <person name="Mohammed S."/>
        </authorList>
    </citation>
    <scope>PHOSPHORYLATION [LARGE SCALE ANALYSIS] AT SER-4; SER-249; SER-375; SER-473; THR-487; SER-494; SER-506; SER-532; SER-534 AND THR-537</scope>
    <scope>IDENTIFICATION BY MASS SPECTROMETRY [LARGE SCALE ANALYSIS]</scope>
    <source>
        <tissue>Cervix carcinoma</tissue>
        <tissue>Erythroleukemia</tissue>
    </source>
</reference>
<reference key="17">
    <citation type="journal article" date="2014" name="J. Proteomics">
        <title>An enzyme assisted RP-RPLC approach for in-depth analysis of human liver phosphoproteome.</title>
        <authorList>
            <person name="Bian Y."/>
            <person name="Song C."/>
            <person name="Cheng K."/>
            <person name="Dong M."/>
            <person name="Wang F."/>
            <person name="Huang J."/>
            <person name="Sun D."/>
            <person name="Wang L."/>
            <person name="Ye M."/>
            <person name="Zou H."/>
        </authorList>
    </citation>
    <scope>PHOSPHORYLATION [LARGE SCALE ANALYSIS] AT SER-375; SER-494 AND SER-506</scope>
    <scope>IDENTIFICATION BY MASS SPECTROMETRY [LARGE SCALE ANALYSIS]</scope>
    <source>
        <tissue>Liver</tissue>
    </source>
</reference>
<comment type="function">
    <text evidence="1 2">Involved in the generation of internal asymmetric signals required for neuronal polarization and neurite outgrowth. Mediates netrin-1-induced F-actin-substrate coupling or 'clutch engagement' within the axon growth cone through activation of CDC42, RAC1 and PAK1-dependent signaling pathway, thereby converting the F-actin retrograde flow into traction forces, concomitantly with filopodium extension and axon outgrowth. Plays a role in cytoskeletal organization by regulating the subcellular localization of phosphoinositide 3-kinase (PI3K) activity at the axonal growth cone. Also plays a role in regenerative neurite outgrowth. In the developing cortex, cooperates with KIF20B to promote both the transition from the multipolar to the bipolar stage and the radial migration of cortical neurons from the ventricular zone toward the superficial layer of the neocortex. Involved in the accumulation of phosphatidylinositol 3,4,5-trisphosphate (PIP3) in the growth cone of primary hippocampal neurons.</text>
</comment>
<comment type="subunit">
    <text evidence="1 2">Interacts with L1CAM; this interaction occurs in axonal growth cones. Interacts with actin filament retrograde flow; this interaction is enhanced in a netrin-1- and PAK1-dependent manner and promotes F-actin-substrate coupling and concomitant formation of traction forces at axonal growth cones. Interacts with RUFY3. Interacts with PFN2. Interacts (via N-terminus) with KIF20B; this interaction is direct and promotes the association of SHTN1 to microtubules in primary neurons. Associates with microtubule.</text>
</comment>
<comment type="interaction">
    <interactant intactId="EBI-308778">
        <id>A0MZ66</id>
    </interactant>
    <interactant intactId="EBI-2834260">
        <id>P62508</id>
        <label>ESRRG</label>
    </interactant>
    <organismsDiffer>false</organismsDiffer>
    <experiments>3</experiments>
</comment>
<comment type="interaction">
    <interactant intactId="EBI-308778">
        <id>A0MZ66</id>
    </interactant>
    <interactant intactId="EBI-704216">
        <id>P05413</id>
        <label>FABP3</label>
    </interactant>
    <organismsDiffer>false</organismsDiffer>
    <experiments>3</experiments>
</comment>
<comment type="interaction">
    <interactant intactId="EBI-308778">
        <id>A0MZ66</id>
    </interactant>
    <interactant intactId="EBI-10254102">
        <id>Q6PJR7</id>
        <label>IGL@</label>
    </interactant>
    <organismsDiffer>false</organismsDiffer>
    <experiments>3</experiments>
</comment>
<comment type="interaction">
    <interactant intactId="EBI-308778">
        <id>A0MZ66</id>
    </interactant>
    <interactant intactId="EBI-744782">
        <id>Q9Y5B8</id>
        <label>NME7</label>
    </interactant>
    <organismsDiffer>false</organismsDiffer>
    <experiments>3</experiments>
</comment>
<comment type="interaction">
    <interactant intactId="EBI-12097232">
        <id>A0MZ66-4</id>
    </interactant>
    <interactant intactId="EBI-12001340">
        <id>P62508-3</id>
        <label>ESRRG</label>
    </interactant>
    <organismsDiffer>false</organismsDiffer>
    <experiments>3</experiments>
</comment>
<comment type="interaction">
    <interactant intactId="EBI-12097232">
        <id>A0MZ66-4</id>
    </interactant>
    <interactant intactId="EBI-2690026">
        <id>Q9Y2D4</id>
        <label>EXOC6B</label>
    </interactant>
    <organismsDiffer>false</organismsDiffer>
    <experiments>3</experiments>
</comment>
<comment type="interaction">
    <interactant intactId="EBI-12097232">
        <id>A0MZ66-4</id>
    </interactant>
    <interactant intactId="EBI-704216">
        <id>P05413</id>
        <label>FABP3</label>
    </interactant>
    <organismsDiffer>false</organismsDiffer>
    <experiments>3</experiments>
</comment>
<comment type="interaction">
    <interactant intactId="EBI-12097232">
        <id>A0MZ66-4</id>
    </interactant>
    <interactant intactId="EBI-744782">
        <id>Q9Y5B8</id>
        <label>NME7</label>
    </interactant>
    <organismsDiffer>false</organismsDiffer>
    <experiments>3</experiments>
</comment>
<comment type="interaction">
    <interactant intactId="EBI-12097232">
        <id>A0MZ66-4</id>
    </interactant>
    <interactant intactId="EBI-12097232">
        <id>A0MZ66-4</id>
        <label>SHTN1</label>
    </interactant>
    <organismsDiffer>false</organismsDiffer>
    <experiments>3</experiments>
</comment>
<comment type="interaction">
    <interactant intactId="EBI-12097232">
        <id>A0MZ66-4</id>
    </interactant>
    <interactant intactId="EBI-357849">
        <id>Q15025</id>
        <label>TNIP1</label>
    </interactant>
    <organismsDiffer>false</organismsDiffer>
    <experiments>3</experiments>
</comment>
<comment type="interaction">
    <interactant intactId="EBI-12097232">
        <id>A0MZ66-4</id>
    </interactant>
    <interactant intactId="EBI-11952721">
        <id>Q05BL1</id>
        <label>TP53BP2</label>
    </interactant>
    <organismsDiffer>false</organismsDiffer>
    <experiments>3</experiments>
</comment>
<comment type="interaction">
    <interactant intactId="EBI-12097232">
        <id>A0MZ66-4</id>
    </interactant>
    <interactant intactId="EBI-746345">
        <id>Q9NP64</id>
        <label>ZCCHC17</label>
    </interactant>
    <organismsDiffer>false</organismsDiffer>
    <experiments>3</experiments>
</comment>
<comment type="interaction">
    <interactant intactId="EBI-10171490">
        <id>A0MZ66-7</id>
    </interactant>
    <interactant intactId="EBI-715662">
        <id>O75936</id>
        <label>BBOX1</label>
    </interactant>
    <organismsDiffer>false</organismsDiffer>
    <experiments>3</experiments>
</comment>
<comment type="interaction">
    <interactant intactId="EBI-10171490">
        <id>A0MZ66-7</id>
    </interactant>
    <interactant intactId="EBI-717422">
        <id>Q12800</id>
        <label>TFCP2</label>
    </interactant>
    <organismsDiffer>false</organismsDiffer>
    <experiments>3</experiments>
</comment>
<comment type="subcellular location">
    <subcellularLocation>
        <location evidence="2">Perikaryon</location>
    </subcellularLocation>
    <subcellularLocation>
        <location evidence="2">Cell projection</location>
        <location evidence="2">Axon</location>
    </subcellularLocation>
    <subcellularLocation>
        <location evidence="2">Cell projection</location>
        <location evidence="2">Growth cone</location>
    </subcellularLocation>
    <subcellularLocation>
        <location evidence="2">Cytoplasm</location>
        <location evidence="2">Cytoskeleton</location>
    </subcellularLocation>
    <subcellularLocation>
        <location evidence="1">Cell projection</location>
        <location evidence="1">Filopodium</location>
    </subcellularLocation>
    <subcellularLocation>
        <location evidence="1">Cell projection</location>
        <location evidence="1">Lamellipodium</location>
    </subcellularLocation>
    <text evidence="1 2">Localizes in multiple growth cones at neurite tips before the neuronal symmetry-breaking step. Accumulates in growth cones of a single nascent axon in a neurite length-dependent manner during the neuronal symmetry-breaking step; when absent from the nascent axon's siblings, probably due to competitive transport, prevents the formation of surplus axons. Transported anterogradely from the soma to the axon growth cone in an actin and myosin-dependent manner and passively diffuses back to the cell bodies. Colocalized with L1CAM in close apposition with actin filaments in filopodia and lamellipodia of axonal growth cones in hippocampal neurons. Exhibits retrograde movements in filopodia and lamellopodia of axonal growth cones. Colocalized with KIF20B along microtubules to the tip of the growing cone in primary hippocampal neurons. Recruited to the growth cone of developing axon in a KIF20B- and microtubule-dependent manner.</text>
</comment>
<comment type="alternative products">
    <event type="alternative splicing"/>
    <isoform>
        <id>A0MZ66-1</id>
        <name>1</name>
        <sequence type="displayed"/>
    </isoform>
    <isoform>
        <id>A0MZ66-2</id>
        <name>2</name>
        <sequence type="described" ref="VSP_027050 VSP_027051"/>
    </isoform>
    <isoform>
        <id>A0MZ66-3</id>
        <name>3</name>
        <sequence type="described" ref="VSP_027053"/>
    </isoform>
    <isoform>
        <id>A0MZ66-4</id>
        <name>4</name>
        <sequence type="described" ref="VSP_027052"/>
    </isoform>
    <isoform>
        <id>A0MZ66-5</id>
        <name>5</name>
        <sequence type="described" ref="VSP_036498"/>
    </isoform>
    <isoform>
        <id>A0MZ66-6</id>
        <name>6</name>
        <sequence type="described" ref="VSP_036499"/>
    </isoform>
    <isoform>
        <id>A0MZ66-7</id>
        <name>7</name>
        <sequence type="described" ref="VSP_036497"/>
    </isoform>
    <isoform>
        <id>A0MZ66-8</id>
        <name>8</name>
        <sequence type="described" ref="VSP_036498 VSP_027052"/>
    </isoform>
</comment>
<comment type="domain">
    <text evidence="1">The N-terminus region is necessary for interaction with actin retrograde filament flow and accumulation in neuronal growth cones.</text>
</comment>
<comment type="PTM">
    <text evidence="1">Phosphorylated on Ser-101 and Ser-249 by PAK1 through a CDC42- and RAC1-dependent signaling pathway, which enhances its association with F-actin retrograde flow in filopodia and lamellipodia of axonal growth cones. Phosphorylation on Ser-101 and Ser-249 is increased by netrin-1.</text>
</comment>
<comment type="similarity">
    <text evidence="10">Belongs to the shootin family.</text>
</comment>
<comment type="sequence caution" evidence="10">
    <conflict type="erroneous initiation">
        <sequence resource="EMBL-CDS" id="AAH22348"/>
    </conflict>
</comment>
<comment type="sequence caution" evidence="10">
    <conflict type="erroneous initiation">
        <sequence resource="EMBL-CDS" id="BAA92019"/>
    </conflict>
</comment>
<comment type="sequence caution" evidence="10">
    <conflict type="erroneous initiation">
        <sequence resource="EMBL-CDS" id="BAG53052"/>
    </conflict>
</comment>
<comment type="sequence caution" evidence="10">
    <conflict type="erroneous initiation">
        <sequence resource="EMBL-CDS" id="BAG53110"/>
    </conflict>
</comment>
<dbReference type="EMBL" id="EF055487">
    <property type="protein sequence ID" value="ABK56022.1"/>
    <property type="molecule type" value="mRNA"/>
</dbReference>
<dbReference type="EMBL" id="AK001984">
    <property type="protein sequence ID" value="BAA92019.1"/>
    <property type="status" value="ALT_INIT"/>
    <property type="molecule type" value="mRNA"/>
</dbReference>
<dbReference type="EMBL" id="AK091381">
    <property type="protein sequence ID" value="BAG52345.1"/>
    <property type="molecule type" value="mRNA"/>
</dbReference>
<dbReference type="EMBL" id="AK091578">
    <property type="protein sequence ID" value="BAG52384.1"/>
    <property type="molecule type" value="mRNA"/>
</dbReference>
<dbReference type="EMBL" id="AK095419">
    <property type="protein sequence ID" value="BAG53052.1"/>
    <property type="status" value="ALT_INIT"/>
    <property type="molecule type" value="mRNA"/>
</dbReference>
<dbReference type="EMBL" id="AK095703">
    <property type="protein sequence ID" value="BAG53109.1"/>
    <property type="molecule type" value="mRNA"/>
</dbReference>
<dbReference type="EMBL" id="AK095709">
    <property type="protein sequence ID" value="BAG53110.1"/>
    <property type="status" value="ALT_INIT"/>
    <property type="molecule type" value="mRNA"/>
</dbReference>
<dbReference type="EMBL" id="AK302705">
    <property type="protein sequence ID" value="BAH13785.1"/>
    <property type="molecule type" value="mRNA"/>
</dbReference>
<dbReference type="EMBL" id="AK304865">
    <property type="protein sequence ID" value="BAG65603.1"/>
    <property type="molecule type" value="mRNA"/>
</dbReference>
<dbReference type="EMBL" id="CR749417">
    <property type="protein sequence ID" value="CAH18259.1"/>
    <property type="molecule type" value="mRNA"/>
</dbReference>
<dbReference type="EMBL" id="AC012308">
    <property type="status" value="NOT_ANNOTATED_CDS"/>
    <property type="molecule type" value="Genomic_DNA"/>
</dbReference>
<dbReference type="EMBL" id="AC023283">
    <property type="status" value="NOT_ANNOTATED_CDS"/>
    <property type="molecule type" value="Genomic_DNA"/>
</dbReference>
<dbReference type="EMBL" id="AL731557">
    <property type="status" value="NOT_ANNOTATED_CDS"/>
    <property type="molecule type" value="Genomic_DNA"/>
</dbReference>
<dbReference type="EMBL" id="CH471066">
    <property type="protein sequence ID" value="EAW49434.1"/>
    <property type="molecule type" value="Genomic_DNA"/>
</dbReference>
<dbReference type="EMBL" id="CH471066">
    <property type="protein sequence ID" value="EAW49438.1"/>
    <property type="molecule type" value="Genomic_DNA"/>
</dbReference>
<dbReference type="EMBL" id="BC022348">
    <property type="protein sequence ID" value="AAH22348.1"/>
    <property type="status" value="ALT_INIT"/>
    <property type="molecule type" value="mRNA"/>
</dbReference>
<dbReference type="EMBL" id="BC032303">
    <property type="protein sequence ID" value="AAH32303.1"/>
    <property type="molecule type" value="mRNA"/>
</dbReference>
<dbReference type="EMBL" id="AB046818">
    <property type="protein sequence ID" value="BAB13424.1"/>
    <property type="molecule type" value="mRNA"/>
</dbReference>
<dbReference type="CCDS" id="CCDS31293.1">
    <molecule id="A0MZ66-2"/>
</dbReference>
<dbReference type="CCDS" id="CCDS44482.1">
    <molecule id="A0MZ66-1"/>
</dbReference>
<dbReference type="CCDS" id="CCDS58097.1">
    <molecule id="A0MZ66-8"/>
</dbReference>
<dbReference type="CCDS" id="CCDS73207.1">
    <molecule id="A0MZ66-5"/>
</dbReference>
<dbReference type="CCDS" id="CCDS73208.1">
    <molecule id="A0MZ66-4"/>
</dbReference>
<dbReference type="RefSeq" id="NP_001120683.1">
    <molecule id="A0MZ66-1"/>
    <property type="nucleotide sequence ID" value="NM_001127211.3"/>
</dbReference>
<dbReference type="RefSeq" id="NP_001245227.1">
    <molecule id="A0MZ66-5"/>
    <property type="nucleotide sequence ID" value="NM_001258298.2"/>
</dbReference>
<dbReference type="RefSeq" id="NP_001245228.1">
    <molecule id="A0MZ66-4"/>
    <property type="nucleotide sequence ID" value="NM_001258299.2"/>
</dbReference>
<dbReference type="RefSeq" id="NP_001245229.1">
    <molecule id="A0MZ66-8"/>
    <property type="nucleotide sequence ID" value="NM_001258300.1"/>
</dbReference>
<dbReference type="RefSeq" id="NP_060800.2">
    <molecule id="A0MZ66-2"/>
    <property type="nucleotide sequence ID" value="NM_018330.7"/>
</dbReference>
<dbReference type="RefSeq" id="XP_016871951.1">
    <property type="nucleotide sequence ID" value="XM_017016462.1"/>
</dbReference>
<dbReference type="SMR" id="A0MZ66"/>
<dbReference type="BioGRID" id="121723">
    <property type="interactions" value="138"/>
</dbReference>
<dbReference type="FunCoup" id="A0MZ66">
    <property type="interactions" value="286"/>
</dbReference>
<dbReference type="IntAct" id="A0MZ66">
    <property type="interactions" value="60"/>
</dbReference>
<dbReference type="MINT" id="A0MZ66"/>
<dbReference type="STRING" id="9606.ENSP00000347532"/>
<dbReference type="GlyGen" id="A0MZ66">
    <property type="glycosylation" value="3 sites, 1 N-linked glycan (1 site), 1 O-linked glycan (1 site)"/>
</dbReference>
<dbReference type="iPTMnet" id="A0MZ66"/>
<dbReference type="PhosphoSitePlus" id="A0MZ66"/>
<dbReference type="BioMuta" id="SHTN1"/>
<dbReference type="jPOST" id="A0MZ66"/>
<dbReference type="MassIVE" id="A0MZ66"/>
<dbReference type="PaxDb" id="9606-ENSP00000347532"/>
<dbReference type="PeptideAtlas" id="A0MZ66"/>
<dbReference type="ProteomicsDB" id="45">
    <molecule id="A0MZ66-1"/>
</dbReference>
<dbReference type="ProteomicsDB" id="46">
    <molecule id="A0MZ66-2"/>
</dbReference>
<dbReference type="ProteomicsDB" id="47">
    <molecule id="A0MZ66-3"/>
</dbReference>
<dbReference type="ProteomicsDB" id="48">
    <molecule id="A0MZ66-4"/>
</dbReference>
<dbReference type="ProteomicsDB" id="49">
    <molecule id="A0MZ66-5"/>
</dbReference>
<dbReference type="ProteomicsDB" id="50">
    <molecule id="A0MZ66-6"/>
</dbReference>
<dbReference type="ProteomicsDB" id="51">
    <molecule id="A0MZ66-7"/>
</dbReference>
<dbReference type="ProteomicsDB" id="6909"/>
<dbReference type="Pumba" id="A0MZ66"/>
<dbReference type="Antibodypedia" id="46270">
    <property type="antibodies" value="41 antibodies from 14 providers"/>
</dbReference>
<dbReference type="DNASU" id="57698"/>
<dbReference type="Ensembl" id="ENST00000260777.14">
    <molecule id="A0MZ66-5"/>
    <property type="protein sequence ID" value="ENSP00000260777.11"/>
    <property type="gene ID" value="ENSG00000187164.20"/>
</dbReference>
<dbReference type="Ensembl" id="ENST00000355371.9">
    <molecule id="A0MZ66-1"/>
    <property type="protein sequence ID" value="ENSP00000347532.4"/>
    <property type="gene ID" value="ENSG00000187164.20"/>
</dbReference>
<dbReference type="Ensembl" id="ENST00000392901.10">
    <molecule id="A0MZ66-8"/>
    <property type="protein sequence ID" value="ENSP00000376635.4"/>
    <property type="gene ID" value="ENSG00000187164.20"/>
</dbReference>
<dbReference type="Ensembl" id="ENST00000392903.3">
    <molecule id="A0MZ66-4"/>
    <property type="protein sequence ID" value="ENSP00000376636.3"/>
    <property type="gene ID" value="ENSG00000187164.20"/>
</dbReference>
<dbReference type="Ensembl" id="ENST00000615301.4">
    <molecule id="A0MZ66-2"/>
    <property type="protein sequence ID" value="ENSP00000480109.1"/>
    <property type="gene ID" value="ENSG00000187164.20"/>
</dbReference>
<dbReference type="GeneID" id="57698"/>
<dbReference type="KEGG" id="hsa:57698"/>
<dbReference type="MANE-Select" id="ENST00000355371.9">
    <property type="protein sequence ID" value="ENSP00000347532.4"/>
    <property type="RefSeq nucleotide sequence ID" value="NM_001127211.3"/>
    <property type="RefSeq protein sequence ID" value="NP_001120683.1"/>
</dbReference>
<dbReference type="UCSC" id="uc001lcz.6">
    <molecule id="A0MZ66-1"/>
    <property type="organism name" value="human"/>
</dbReference>
<dbReference type="AGR" id="HGNC:29319"/>
<dbReference type="CTD" id="57698"/>
<dbReference type="DisGeNET" id="57698"/>
<dbReference type="GeneCards" id="SHTN1"/>
<dbReference type="HGNC" id="HGNC:29319">
    <property type="gene designation" value="SHTN1"/>
</dbReference>
<dbReference type="HPA" id="ENSG00000187164">
    <property type="expression patterns" value="Tissue enriched (brain)"/>
</dbReference>
<dbReference type="MIM" id="611171">
    <property type="type" value="gene"/>
</dbReference>
<dbReference type="neXtProt" id="NX_A0MZ66"/>
<dbReference type="OpenTargets" id="ENSG00000187164"/>
<dbReference type="PharmGKB" id="PA134973737"/>
<dbReference type="VEuPathDB" id="HostDB:ENSG00000187164"/>
<dbReference type="eggNOG" id="ENOG502QVVT">
    <property type="taxonomic scope" value="Eukaryota"/>
</dbReference>
<dbReference type="GeneTree" id="ENSGT00510000048167"/>
<dbReference type="HOGENOM" id="CLU_027649_1_1_1"/>
<dbReference type="InParanoid" id="A0MZ66"/>
<dbReference type="OMA" id="MQQASQW"/>
<dbReference type="OrthoDB" id="6111338at2759"/>
<dbReference type="PAN-GO" id="A0MZ66">
    <property type="GO annotations" value="5 GO annotations based on evolutionary models"/>
</dbReference>
<dbReference type="PhylomeDB" id="A0MZ66"/>
<dbReference type="TreeFam" id="TF326250"/>
<dbReference type="PathwayCommons" id="A0MZ66"/>
<dbReference type="Reactome" id="R-HSA-437239">
    <property type="pathway name" value="Recycling pathway of L1"/>
</dbReference>
<dbReference type="SignaLink" id="A0MZ66"/>
<dbReference type="BioGRID-ORCS" id="57698">
    <property type="hits" value="10 hits in 1154 CRISPR screens"/>
</dbReference>
<dbReference type="CD-CODE" id="FB4E32DD">
    <property type="entry name" value="Presynaptic clusters and postsynaptic densities"/>
</dbReference>
<dbReference type="ChiTaRS" id="SHTN1">
    <property type="organism name" value="human"/>
</dbReference>
<dbReference type="GenomeRNAi" id="57698"/>
<dbReference type="Pharos" id="A0MZ66">
    <property type="development level" value="Tbio"/>
</dbReference>
<dbReference type="PRO" id="PR:A0MZ66"/>
<dbReference type="Proteomes" id="UP000005640">
    <property type="component" value="Chromosome 10"/>
</dbReference>
<dbReference type="RNAct" id="A0MZ66">
    <property type="molecule type" value="protein"/>
</dbReference>
<dbReference type="Bgee" id="ENSG00000187164">
    <property type="expression patterns" value="Expressed in medial globus pallidus and 193 other cell types or tissues"/>
</dbReference>
<dbReference type="GO" id="GO:0030424">
    <property type="term" value="C:axon"/>
    <property type="evidence" value="ECO:0000250"/>
    <property type="project" value="UniProtKB"/>
</dbReference>
<dbReference type="GO" id="GO:0044295">
    <property type="term" value="C:axonal growth cone"/>
    <property type="evidence" value="ECO:0000250"/>
    <property type="project" value="UniProtKB"/>
</dbReference>
<dbReference type="GO" id="GO:0031252">
    <property type="term" value="C:cell leading edge"/>
    <property type="evidence" value="ECO:0000250"/>
    <property type="project" value="UniProtKB"/>
</dbReference>
<dbReference type="GO" id="GO:0005737">
    <property type="term" value="C:cytoplasm"/>
    <property type="evidence" value="ECO:0000314"/>
    <property type="project" value="BHF-UCL"/>
</dbReference>
<dbReference type="GO" id="GO:0030175">
    <property type="term" value="C:filopodium"/>
    <property type="evidence" value="ECO:0000250"/>
    <property type="project" value="UniProtKB"/>
</dbReference>
<dbReference type="GO" id="GO:0030426">
    <property type="term" value="C:growth cone"/>
    <property type="evidence" value="ECO:0000250"/>
    <property type="project" value="UniProtKB"/>
</dbReference>
<dbReference type="GO" id="GO:0030027">
    <property type="term" value="C:lamellipodium"/>
    <property type="evidence" value="ECO:0000250"/>
    <property type="project" value="UniProtKB"/>
</dbReference>
<dbReference type="GO" id="GO:0005874">
    <property type="term" value="C:microtubule"/>
    <property type="evidence" value="ECO:0000314"/>
    <property type="project" value="MGI"/>
</dbReference>
<dbReference type="GO" id="GO:0005875">
    <property type="term" value="C:microtubule associated complex"/>
    <property type="evidence" value="ECO:0000250"/>
    <property type="project" value="UniProtKB"/>
</dbReference>
<dbReference type="GO" id="GO:0015630">
    <property type="term" value="C:microtubule cytoskeleton"/>
    <property type="evidence" value="ECO:0000250"/>
    <property type="project" value="UniProtKB"/>
</dbReference>
<dbReference type="GO" id="GO:0043204">
    <property type="term" value="C:perikaryon"/>
    <property type="evidence" value="ECO:0000250"/>
    <property type="project" value="UniProtKB"/>
</dbReference>
<dbReference type="GO" id="GO:0048471">
    <property type="term" value="C:perinuclear region of cytoplasm"/>
    <property type="evidence" value="ECO:0000250"/>
    <property type="project" value="UniProtKB"/>
</dbReference>
<dbReference type="GO" id="GO:0051015">
    <property type="term" value="F:actin filament binding"/>
    <property type="evidence" value="ECO:0000250"/>
    <property type="project" value="UniProtKB"/>
</dbReference>
<dbReference type="GO" id="GO:0045296">
    <property type="term" value="F:cadherin binding"/>
    <property type="evidence" value="ECO:0007005"/>
    <property type="project" value="BHF-UCL"/>
</dbReference>
<dbReference type="GO" id="GO:0042802">
    <property type="term" value="F:identical protein binding"/>
    <property type="evidence" value="ECO:0000353"/>
    <property type="project" value="IntAct"/>
</dbReference>
<dbReference type="GO" id="GO:0019894">
    <property type="term" value="F:kinesin binding"/>
    <property type="evidence" value="ECO:0007669"/>
    <property type="project" value="Ensembl"/>
</dbReference>
<dbReference type="GO" id="GO:0061573">
    <property type="term" value="P:actin filament bundle retrograde transport"/>
    <property type="evidence" value="ECO:0000250"/>
    <property type="project" value="UniProtKB"/>
</dbReference>
<dbReference type="GO" id="GO:0007409">
    <property type="term" value="P:axonogenesis"/>
    <property type="evidence" value="ECO:0000250"/>
    <property type="project" value="UniProtKB"/>
</dbReference>
<dbReference type="GO" id="GO:0032488">
    <property type="term" value="P:Cdc42 protein signal transduction"/>
    <property type="evidence" value="ECO:0000250"/>
    <property type="project" value="UniProtKB"/>
</dbReference>
<dbReference type="GO" id="GO:0060327">
    <property type="term" value="P:cytoplasmic actin-based contraction involved in cell motility"/>
    <property type="evidence" value="ECO:0000250"/>
    <property type="project" value="UniProtKB"/>
</dbReference>
<dbReference type="GO" id="GO:0061163">
    <property type="term" value="P:endoplasmic reticulum polarization"/>
    <property type="evidence" value="ECO:0000250"/>
    <property type="project" value="UniProtKB"/>
</dbReference>
<dbReference type="GO" id="GO:0038007">
    <property type="term" value="P:netrin-activated signaling pathway"/>
    <property type="evidence" value="ECO:0000250"/>
    <property type="project" value="UniProtKB"/>
</dbReference>
<dbReference type="GO" id="GO:0048812">
    <property type="term" value="P:neuron projection morphogenesis"/>
    <property type="evidence" value="ECO:0000250"/>
    <property type="project" value="UniProtKB"/>
</dbReference>
<dbReference type="GO" id="GO:0045773">
    <property type="term" value="P:positive regulation of axon extension"/>
    <property type="evidence" value="ECO:0000250"/>
    <property type="project" value="UniProtKB"/>
</dbReference>
<dbReference type="GO" id="GO:2001224">
    <property type="term" value="P:positive regulation of neuron migration"/>
    <property type="evidence" value="ECO:0000314"/>
    <property type="project" value="UniProtKB"/>
</dbReference>
<dbReference type="GO" id="GO:0007265">
    <property type="term" value="P:Ras protein signal transduction"/>
    <property type="evidence" value="ECO:0000250"/>
    <property type="project" value="UniProtKB"/>
</dbReference>
<dbReference type="GO" id="GO:2000114">
    <property type="term" value="P:regulation of establishment of cell polarity"/>
    <property type="evidence" value="ECO:0000250"/>
    <property type="project" value="UniProtKB"/>
</dbReference>
<dbReference type="GO" id="GO:0006930">
    <property type="term" value="P:substrate-dependent cell migration, cell extension"/>
    <property type="evidence" value="ECO:0000250"/>
    <property type="project" value="UniProtKB"/>
</dbReference>
<dbReference type="Gene3D" id="1.20.5.1160">
    <property type="entry name" value="Vasodilator-stimulated phosphoprotein"/>
    <property type="match status" value="1"/>
</dbReference>
<dbReference type="InterPro" id="IPR024849">
    <property type="entry name" value="Shootin-1"/>
</dbReference>
<dbReference type="PANTHER" id="PTHR46606">
    <property type="entry name" value="SHOOTIN-1"/>
    <property type="match status" value="1"/>
</dbReference>
<dbReference type="PANTHER" id="PTHR46606:SF3">
    <property type="entry name" value="SHOOTIN-1"/>
    <property type="match status" value="1"/>
</dbReference>
<organism>
    <name type="scientific">Homo sapiens</name>
    <name type="common">Human</name>
    <dbReference type="NCBI Taxonomy" id="9606"/>
    <lineage>
        <taxon>Eukaryota</taxon>
        <taxon>Metazoa</taxon>
        <taxon>Chordata</taxon>
        <taxon>Craniata</taxon>
        <taxon>Vertebrata</taxon>
        <taxon>Euteleostomi</taxon>
        <taxon>Mammalia</taxon>
        <taxon>Eutheria</taxon>
        <taxon>Euarchontoglires</taxon>
        <taxon>Primates</taxon>
        <taxon>Haplorrhini</taxon>
        <taxon>Catarrhini</taxon>
        <taxon>Hominidae</taxon>
        <taxon>Homo</taxon>
    </lineage>
</organism>